<proteinExistence type="inferred from homology"/>
<gene>
    <name evidence="2" type="primary">rpsL</name>
    <name type="ordered locus">SUN_0133</name>
</gene>
<protein>
    <recommendedName>
        <fullName evidence="2">Small ribosomal subunit protein uS12</fullName>
    </recommendedName>
    <alternativeName>
        <fullName evidence="4">30S ribosomal protein S12</fullName>
    </alternativeName>
</protein>
<reference key="1">
    <citation type="journal article" date="2007" name="Proc. Natl. Acad. Sci. U.S.A.">
        <title>Deep-sea vent epsilon-proteobacterial genomes provide insights into emergence of pathogens.</title>
        <authorList>
            <person name="Nakagawa S."/>
            <person name="Takaki Y."/>
            <person name="Shimamura S."/>
            <person name="Reysenbach A.-L."/>
            <person name="Takai K."/>
            <person name="Horikoshi K."/>
        </authorList>
    </citation>
    <scope>NUCLEOTIDE SEQUENCE [LARGE SCALE GENOMIC DNA]</scope>
    <source>
        <strain>NBC37-1</strain>
    </source>
</reference>
<accession>A6Q6I4</accession>
<evidence type="ECO:0000250" key="1"/>
<evidence type="ECO:0000255" key="2">
    <source>
        <dbReference type="HAMAP-Rule" id="MF_00403"/>
    </source>
</evidence>
<evidence type="ECO:0000256" key="3">
    <source>
        <dbReference type="SAM" id="MobiDB-lite"/>
    </source>
</evidence>
<evidence type="ECO:0000305" key="4"/>
<dbReference type="EMBL" id="AP009179">
    <property type="protein sequence ID" value="BAF71093.1"/>
    <property type="molecule type" value="Genomic_DNA"/>
</dbReference>
<dbReference type="RefSeq" id="WP_011979826.1">
    <property type="nucleotide sequence ID" value="NC_009663.1"/>
</dbReference>
<dbReference type="SMR" id="A6Q6I4"/>
<dbReference type="STRING" id="387093.SUN_0133"/>
<dbReference type="KEGG" id="sun:SUN_0133"/>
<dbReference type="eggNOG" id="COG0048">
    <property type="taxonomic scope" value="Bacteria"/>
</dbReference>
<dbReference type="HOGENOM" id="CLU_104295_1_2_7"/>
<dbReference type="OrthoDB" id="9802366at2"/>
<dbReference type="Proteomes" id="UP000006378">
    <property type="component" value="Chromosome"/>
</dbReference>
<dbReference type="GO" id="GO:0015935">
    <property type="term" value="C:small ribosomal subunit"/>
    <property type="evidence" value="ECO:0007669"/>
    <property type="project" value="InterPro"/>
</dbReference>
<dbReference type="GO" id="GO:0019843">
    <property type="term" value="F:rRNA binding"/>
    <property type="evidence" value="ECO:0007669"/>
    <property type="project" value="UniProtKB-UniRule"/>
</dbReference>
<dbReference type="GO" id="GO:0003735">
    <property type="term" value="F:structural constituent of ribosome"/>
    <property type="evidence" value="ECO:0007669"/>
    <property type="project" value="InterPro"/>
</dbReference>
<dbReference type="GO" id="GO:0000049">
    <property type="term" value="F:tRNA binding"/>
    <property type="evidence" value="ECO:0007669"/>
    <property type="project" value="UniProtKB-UniRule"/>
</dbReference>
<dbReference type="GO" id="GO:0006412">
    <property type="term" value="P:translation"/>
    <property type="evidence" value="ECO:0007669"/>
    <property type="project" value="UniProtKB-UniRule"/>
</dbReference>
<dbReference type="CDD" id="cd03368">
    <property type="entry name" value="Ribosomal_S12"/>
    <property type="match status" value="1"/>
</dbReference>
<dbReference type="FunFam" id="2.40.50.140:FF:000001">
    <property type="entry name" value="30S ribosomal protein S12"/>
    <property type="match status" value="1"/>
</dbReference>
<dbReference type="Gene3D" id="2.40.50.140">
    <property type="entry name" value="Nucleic acid-binding proteins"/>
    <property type="match status" value="1"/>
</dbReference>
<dbReference type="HAMAP" id="MF_00403_B">
    <property type="entry name" value="Ribosomal_uS12_B"/>
    <property type="match status" value="1"/>
</dbReference>
<dbReference type="InterPro" id="IPR012340">
    <property type="entry name" value="NA-bd_OB-fold"/>
</dbReference>
<dbReference type="InterPro" id="IPR006032">
    <property type="entry name" value="Ribosomal_uS12"/>
</dbReference>
<dbReference type="InterPro" id="IPR005679">
    <property type="entry name" value="Ribosomal_uS12_bac"/>
</dbReference>
<dbReference type="NCBIfam" id="TIGR00981">
    <property type="entry name" value="rpsL_bact"/>
    <property type="match status" value="1"/>
</dbReference>
<dbReference type="PANTHER" id="PTHR11652">
    <property type="entry name" value="30S RIBOSOMAL PROTEIN S12 FAMILY MEMBER"/>
    <property type="match status" value="1"/>
</dbReference>
<dbReference type="Pfam" id="PF00164">
    <property type="entry name" value="Ribosom_S12_S23"/>
    <property type="match status" value="1"/>
</dbReference>
<dbReference type="PIRSF" id="PIRSF002133">
    <property type="entry name" value="Ribosomal_S12/S23"/>
    <property type="match status" value="1"/>
</dbReference>
<dbReference type="PRINTS" id="PR01034">
    <property type="entry name" value="RIBOSOMALS12"/>
</dbReference>
<dbReference type="SUPFAM" id="SSF50249">
    <property type="entry name" value="Nucleic acid-binding proteins"/>
    <property type="match status" value="1"/>
</dbReference>
<dbReference type="PROSITE" id="PS00055">
    <property type="entry name" value="RIBOSOMAL_S12"/>
    <property type="match status" value="1"/>
</dbReference>
<comment type="function">
    <text evidence="2">With S4 and S5 plays an important role in translational accuracy.</text>
</comment>
<comment type="function">
    <text evidence="2">Interacts with and stabilizes bases of the 16S rRNA that are involved in tRNA selection in the A site and with the mRNA backbone. Located at the interface of the 30S and 50S subunits, it traverses the body of the 30S subunit contacting proteins on the other side and probably holding the rRNA structure together. The combined cluster of proteins S8, S12 and S17 appears to hold together the shoulder and platform of the 30S subunit.</text>
</comment>
<comment type="subunit">
    <text evidence="2">Part of the 30S ribosomal subunit. Contacts proteins S8 and S17. May interact with IF1 in the 30S initiation complex.</text>
</comment>
<comment type="similarity">
    <text evidence="2">Belongs to the universal ribosomal protein uS12 family.</text>
</comment>
<sequence>MPTINQLIRKERKKQVKKSKSPALVKCPQRRGVCTRVYTTTPKKPNSALRKVAKVRLTSGFEVISYIGGEGHNLQEHSIVLVRGGRIKDLPGVKYHIVRGALDASGVTGRTVARSKYGTKKPK</sequence>
<organism>
    <name type="scientific">Sulfurovum sp. (strain NBC37-1)</name>
    <dbReference type="NCBI Taxonomy" id="387093"/>
    <lineage>
        <taxon>Bacteria</taxon>
        <taxon>Pseudomonadati</taxon>
        <taxon>Campylobacterota</taxon>
        <taxon>Epsilonproteobacteria</taxon>
        <taxon>Campylobacterales</taxon>
        <taxon>Sulfurovaceae</taxon>
        <taxon>Sulfurovum</taxon>
    </lineage>
</organism>
<keyword id="KW-0488">Methylation</keyword>
<keyword id="KW-0687">Ribonucleoprotein</keyword>
<keyword id="KW-0689">Ribosomal protein</keyword>
<keyword id="KW-0694">RNA-binding</keyword>
<keyword id="KW-0699">rRNA-binding</keyword>
<keyword id="KW-0820">tRNA-binding</keyword>
<feature type="chain" id="PRO_1000049815" description="Small ribosomal subunit protein uS12">
    <location>
        <begin position="1"/>
        <end position="123"/>
    </location>
</feature>
<feature type="region of interest" description="Disordered" evidence="3">
    <location>
        <begin position="1"/>
        <end position="24"/>
    </location>
</feature>
<feature type="compositionally biased region" description="Basic residues" evidence="3">
    <location>
        <begin position="10"/>
        <end position="20"/>
    </location>
</feature>
<feature type="modified residue" description="3-methylthioaspartic acid" evidence="1">
    <location>
        <position position="89"/>
    </location>
</feature>
<name>RS12_SULNB</name>